<evidence type="ECO:0000250" key="1">
    <source>
        <dbReference type="UniProtKB" id="Q9P260"/>
    </source>
</evidence>
<evidence type="ECO:0000255" key="2"/>
<evidence type="ECO:0000255" key="3">
    <source>
        <dbReference type="PROSITE-ProRule" id="PRU00103"/>
    </source>
</evidence>
<evidence type="ECO:0000255" key="4">
    <source>
        <dbReference type="PROSITE-ProRule" id="PRU00126"/>
    </source>
</evidence>
<evidence type="ECO:0000256" key="5">
    <source>
        <dbReference type="SAM" id="MobiDB-lite"/>
    </source>
</evidence>
<evidence type="ECO:0000305" key="6"/>
<keyword id="KW-0175">Coiled coil</keyword>
<keyword id="KW-0967">Endosome</keyword>
<keyword id="KW-0333">Golgi apparatus</keyword>
<keyword id="KW-0445">Lipid transport</keyword>
<keyword id="KW-1185">Reference proteome</keyword>
<keyword id="KW-0677">Repeat</keyword>
<keyword id="KW-0813">Transport</keyword>
<proteinExistence type="evidence at transcript level"/>
<feature type="chain" id="PRO_0000313095" description="RAB11-binding protein RELCH homolog">
    <location>
        <begin position="1"/>
        <end position="1189"/>
    </location>
</feature>
<feature type="domain" description="LisH" evidence="4">
    <location>
        <begin position="229"/>
        <end position="261"/>
    </location>
</feature>
<feature type="repeat" description="HEAT 1" evidence="6">
    <location>
        <begin position="574"/>
        <end position="612"/>
    </location>
</feature>
<feature type="repeat" description="HEAT 2" evidence="3">
    <location>
        <begin position="613"/>
        <end position="652"/>
    </location>
</feature>
<feature type="repeat" description="HEAT 3" evidence="3">
    <location>
        <begin position="977"/>
        <end position="1015"/>
    </location>
</feature>
<feature type="region of interest" description="Disordered" evidence="5">
    <location>
        <begin position="1"/>
        <end position="65"/>
    </location>
</feature>
<feature type="region of interest" description="Disordered" evidence="5">
    <location>
        <begin position="123"/>
        <end position="154"/>
    </location>
</feature>
<feature type="region of interest" description="Disordered" evidence="5">
    <location>
        <begin position="374"/>
        <end position="453"/>
    </location>
</feature>
<feature type="coiled-coil region" evidence="2">
    <location>
        <begin position="172"/>
        <end position="205"/>
    </location>
</feature>
<feature type="coiled-coil region" evidence="2">
    <location>
        <begin position="326"/>
        <end position="373"/>
    </location>
</feature>
<feature type="compositionally biased region" description="Basic and acidic residues" evidence="5">
    <location>
        <begin position="19"/>
        <end position="36"/>
    </location>
</feature>
<feature type="compositionally biased region" description="Polar residues" evidence="5">
    <location>
        <begin position="124"/>
        <end position="134"/>
    </location>
</feature>
<feature type="compositionally biased region" description="Low complexity" evidence="5">
    <location>
        <begin position="404"/>
        <end position="425"/>
    </location>
</feature>
<feature type="compositionally biased region" description="Polar residues" evidence="5">
    <location>
        <begin position="426"/>
        <end position="453"/>
    </location>
</feature>
<gene>
    <name type="primary">relch</name>
    <name type="ORF">zgc:66014</name>
</gene>
<dbReference type="EMBL" id="BC061956">
    <property type="protein sequence ID" value="AAH61956.1"/>
    <property type="molecule type" value="mRNA"/>
</dbReference>
<dbReference type="RefSeq" id="NP_957138.1">
    <property type="nucleotide sequence ID" value="NM_200844.1"/>
</dbReference>
<dbReference type="FunCoup" id="Q6P6Y1">
    <property type="interactions" value="1013"/>
</dbReference>
<dbReference type="STRING" id="7955.ENSDARP00000134891"/>
<dbReference type="PaxDb" id="7955-ENSDARP00000055445"/>
<dbReference type="GeneID" id="393817"/>
<dbReference type="KEGG" id="dre:393817"/>
<dbReference type="AGR" id="ZFIN:ZDB-GENE-040426-1507"/>
<dbReference type="CTD" id="57614"/>
<dbReference type="ZFIN" id="ZDB-GENE-040426-1507">
    <property type="gene designation" value="relch"/>
</dbReference>
<dbReference type="eggNOG" id="KOG0211">
    <property type="taxonomic scope" value="Eukaryota"/>
</dbReference>
<dbReference type="InParanoid" id="Q6P6Y1"/>
<dbReference type="OrthoDB" id="1695393at2759"/>
<dbReference type="PhylomeDB" id="Q6P6Y1"/>
<dbReference type="PRO" id="PR:Q6P6Y1"/>
<dbReference type="Proteomes" id="UP000000437">
    <property type="component" value="Alternate scaffold 24"/>
</dbReference>
<dbReference type="Proteomes" id="UP000000437">
    <property type="component" value="Chromosome 24"/>
</dbReference>
<dbReference type="GO" id="GO:0055037">
    <property type="term" value="C:recycling endosome"/>
    <property type="evidence" value="ECO:0000250"/>
    <property type="project" value="UniProtKB"/>
</dbReference>
<dbReference type="GO" id="GO:0005802">
    <property type="term" value="C:trans-Golgi network"/>
    <property type="evidence" value="ECO:0000250"/>
    <property type="project" value="UniProtKB"/>
</dbReference>
<dbReference type="GO" id="GO:0032367">
    <property type="term" value="P:intracellular cholesterol transport"/>
    <property type="evidence" value="ECO:0000250"/>
    <property type="project" value="UniProtKB"/>
</dbReference>
<dbReference type="FunFam" id="1.25.10.10:FF:000080">
    <property type="entry name" value="lisH domain and HEAT repeat-containing protein KIAA1468 homolog"/>
    <property type="match status" value="1"/>
</dbReference>
<dbReference type="FunFam" id="1.25.10.10:FF:000218">
    <property type="entry name" value="lisH domain and HEAT repeat-containing protein KIAA1468 homolog isoform X1"/>
    <property type="match status" value="1"/>
</dbReference>
<dbReference type="Gene3D" id="1.25.10.10">
    <property type="entry name" value="Leucine-rich Repeat Variant"/>
    <property type="match status" value="2"/>
</dbReference>
<dbReference type="InterPro" id="IPR011989">
    <property type="entry name" value="ARM-like"/>
</dbReference>
<dbReference type="InterPro" id="IPR016024">
    <property type="entry name" value="ARM-type_fold"/>
</dbReference>
<dbReference type="InterPro" id="IPR021133">
    <property type="entry name" value="HEAT_type_2"/>
</dbReference>
<dbReference type="InterPro" id="IPR006594">
    <property type="entry name" value="LisH"/>
</dbReference>
<dbReference type="InterPro" id="IPR040362">
    <property type="entry name" value="RELCH"/>
</dbReference>
<dbReference type="PANTHER" id="PTHR32059">
    <property type="entry name" value="RAB11-BINDING PROTEIN RELCH"/>
    <property type="match status" value="1"/>
</dbReference>
<dbReference type="PANTHER" id="PTHR32059:SF0">
    <property type="entry name" value="RAB11-BINDING PROTEIN RELCH"/>
    <property type="match status" value="1"/>
</dbReference>
<dbReference type="SMART" id="SM00667">
    <property type="entry name" value="LisH"/>
    <property type="match status" value="1"/>
</dbReference>
<dbReference type="SUPFAM" id="SSF48371">
    <property type="entry name" value="ARM repeat"/>
    <property type="match status" value="1"/>
</dbReference>
<dbReference type="PROSITE" id="PS50077">
    <property type="entry name" value="HEAT_REPEAT"/>
    <property type="match status" value="2"/>
</dbReference>
<dbReference type="PROSITE" id="PS50896">
    <property type="entry name" value="LISH"/>
    <property type="match status" value="1"/>
</dbReference>
<comment type="function">
    <text evidence="1">May regulate intracellular cholesterol transport.</text>
</comment>
<comment type="subcellular location">
    <subcellularLocation>
        <location evidence="1">Recycling endosome</location>
    </subcellularLocation>
    <subcellularLocation>
        <location evidence="1">Golgi apparatus</location>
        <location evidence="1">trans-Golgi network</location>
    </subcellularLocation>
</comment>
<organism>
    <name type="scientific">Danio rerio</name>
    <name type="common">Zebrafish</name>
    <name type="synonym">Brachydanio rerio</name>
    <dbReference type="NCBI Taxonomy" id="7955"/>
    <lineage>
        <taxon>Eukaryota</taxon>
        <taxon>Metazoa</taxon>
        <taxon>Chordata</taxon>
        <taxon>Craniata</taxon>
        <taxon>Vertebrata</taxon>
        <taxon>Euteleostomi</taxon>
        <taxon>Actinopterygii</taxon>
        <taxon>Neopterygii</taxon>
        <taxon>Teleostei</taxon>
        <taxon>Ostariophysi</taxon>
        <taxon>Cypriniformes</taxon>
        <taxon>Danionidae</taxon>
        <taxon>Danioninae</taxon>
        <taxon>Danio</taxon>
    </lineage>
</organism>
<protein>
    <recommendedName>
        <fullName>RAB11-binding protein RELCH homolog</fullName>
    </recommendedName>
    <alternativeName>
        <fullName>LisH domain and HEAT repeat-containing protein KIAA1468</fullName>
    </alternativeName>
    <alternativeName>
        <fullName>RAB11-binding and LisH domain, coiled-coil and HEAT repeat-containing protein RELCH</fullName>
    </alternativeName>
</protein>
<sequence>MAAGNVNPFNVSDSEEEAEQRQDGADTERSPSDEAQGHSLGPFSPPAYSDPAALLSSNRTSPSVDGIPASAAAVSGIGAETRVSLDAIAAQLLRDQYILTALELHTELLEAGRELPRLRDYFSNPGNFERQSGTPPACKEQGVGPGGPLNRAGSISTLDSLDFARYSDDGNRESDERVAVLEFELRKAKETIQALRANLTQAAECEIASQERKNYKSSPETQEPIRPLEKRALNFLVNEYLLKNEYKLTSITFSDENDDQDFELWDDVGLNIPKPPDLLQLYRNCGNSQPLHRDTVDVAVSVDPSDLPADYFTQEPVQQTDVIQQQQQQEVVQELEYQISLLNSEKQSLAEQIKKLQSDIQALQRNVSSELTAGVKSIQSKENPKCDKPPLDNGQYLDIRGVTETDSSSDTTKTSTSTTIATDCTENSTTATQPHSKLKANGQQSKSSVQFDQPNRKLSPAFHQALLSFCRMSADSRLGSEVSRIADSEQSVMLMLGRCLPHIVPNVLLAKREELIPLILCTACLHPEPKERDQLLHILFNLIKRPDDEQRQMILTGCVAFAQHVGPTRVEAELLPQCWEQINHKYPERRLLVAEACGALAPYLPKEIRSSLVLSMLQQMLADDKADMVREAVVKSLGVIMGYIDDPDKYSQGFELMLLSLGDPSERVVSATHQVFIPAFAAWCTELGNLQSQLIPSLLTRIEKLLKQGEYGLDEHKLHMYLSALQSLIPSLFAVLLQNAPFTSRVKLQGDVPPIEVTRFPRPASPLQDVATIVGSREQLAVLLHLYDHQLQHEGTTGWDSLLWVVNQFLPQIIDIVGRINVTSSTCVHEFSRFFWRLCRTFGKIFTNTKVKPQFQEILRLSEENVDATAGNGILTKATVPIYATGVLTCYNQEEDRKLLVGFLEDVMTTLSLSHAPLDSLKASFVELGANPAYHELLLTVLWYGVVHTSALVRCTAARMFELLVKGVNETLVAQRVVPALITLSSDPEISVRISTIPAFGTIMETVTQKELLERVKMQLASFLEDPQYQDQHSLHMEIIKTFGRVGPNAEPRFRDEFVLPHLHKLALCNNQQTVESKRIDIATQLFEAYSALSCCFISEELMVNHFLPGLRCLRTDMEQLSPEHEVILSSMIKECEIKVENKGIGEAQGSISIAASLVGEDAKTKFLSKMGQLTTSGAMLANVFQRKK</sequence>
<name>RELCH_DANRE</name>
<reference key="1">
    <citation type="submission" date="2003-11" db="EMBL/GenBank/DDBJ databases">
        <authorList>
            <consortium name="NIH - Zebrafish Gene Collection (ZGC) project"/>
        </authorList>
    </citation>
    <scope>NUCLEOTIDE SEQUENCE [LARGE SCALE MRNA]</scope>
    <source>
        <tissue>Kidney</tissue>
    </source>
</reference>
<accession>Q6P6Y1</accession>